<name>F186A_HUMAN</name>
<reference key="1">
    <citation type="journal article" date="2006" name="Nature">
        <title>The finished DNA sequence of human chromosome 12.</title>
        <authorList>
            <person name="Scherer S.E."/>
            <person name="Muzny D.M."/>
            <person name="Buhay C.J."/>
            <person name="Chen R."/>
            <person name="Cree A."/>
            <person name="Ding Y."/>
            <person name="Dugan-Rocha S."/>
            <person name="Gill R."/>
            <person name="Gunaratne P."/>
            <person name="Harris R.A."/>
            <person name="Hawes A.C."/>
            <person name="Hernandez J."/>
            <person name="Hodgson A.V."/>
            <person name="Hume J."/>
            <person name="Jackson A."/>
            <person name="Khan Z.M."/>
            <person name="Kovar-Smith C."/>
            <person name="Lewis L.R."/>
            <person name="Lozado R.J."/>
            <person name="Metzker M.L."/>
            <person name="Milosavljevic A."/>
            <person name="Miner G.R."/>
            <person name="Montgomery K.T."/>
            <person name="Morgan M.B."/>
            <person name="Nazareth L.V."/>
            <person name="Scott G."/>
            <person name="Sodergren E."/>
            <person name="Song X.-Z."/>
            <person name="Steffen D."/>
            <person name="Lovering R.C."/>
            <person name="Wheeler D.A."/>
            <person name="Worley K.C."/>
            <person name="Yuan Y."/>
            <person name="Zhang Z."/>
            <person name="Adams C.Q."/>
            <person name="Ansari-Lari M.A."/>
            <person name="Ayele M."/>
            <person name="Brown M.J."/>
            <person name="Chen G."/>
            <person name="Chen Z."/>
            <person name="Clerc-Blankenburg K.P."/>
            <person name="Davis C."/>
            <person name="Delgado O."/>
            <person name="Dinh H.H."/>
            <person name="Draper H."/>
            <person name="Gonzalez-Garay M.L."/>
            <person name="Havlak P."/>
            <person name="Jackson L.R."/>
            <person name="Jacob L.S."/>
            <person name="Kelly S.H."/>
            <person name="Li L."/>
            <person name="Li Z."/>
            <person name="Liu J."/>
            <person name="Liu W."/>
            <person name="Lu J."/>
            <person name="Maheshwari M."/>
            <person name="Nguyen B.-V."/>
            <person name="Okwuonu G.O."/>
            <person name="Pasternak S."/>
            <person name="Perez L.M."/>
            <person name="Plopper F.J.H."/>
            <person name="Santibanez J."/>
            <person name="Shen H."/>
            <person name="Tabor P.E."/>
            <person name="Verduzco D."/>
            <person name="Waldron L."/>
            <person name="Wang Q."/>
            <person name="Williams G.A."/>
            <person name="Zhang J."/>
            <person name="Zhou J."/>
            <person name="Allen C.C."/>
            <person name="Amin A.G."/>
            <person name="Anyalebechi V."/>
            <person name="Bailey M."/>
            <person name="Barbaria J.A."/>
            <person name="Bimage K.E."/>
            <person name="Bryant N.P."/>
            <person name="Burch P.E."/>
            <person name="Burkett C.E."/>
            <person name="Burrell K.L."/>
            <person name="Calderon E."/>
            <person name="Cardenas V."/>
            <person name="Carter K."/>
            <person name="Casias K."/>
            <person name="Cavazos I."/>
            <person name="Cavazos S.R."/>
            <person name="Ceasar H."/>
            <person name="Chacko J."/>
            <person name="Chan S.N."/>
            <person name="Chavez D."/>
            <person name="Christopoulos C."/>
            <person name="Chu J."/>
            <person name="Cockrell R."/>
            <person name="Cox C.D."/>
            <person name="Dang M."/>
            <person name="Dathorne S.R."/>
            <person name="David R."/>
            <person name="Davis C.M."/>
            <person name="Davy-Carroll L."/>
            <person name="Deshazo D.R."/>
            <person name="Donlin J.E."/>
            <person name="D'Souza L."/>
            <person name="Eaves K.A."/>
            <person name="Egan A."/>
            <person name="Emery-Cohen A.J."/>
            <person name="Escotto M."/>
            <person name="Flagg N."/>
            <person name="Forbes L.D."/>
            <person name="Gabisi A.M."/>
            <person name="Garza M."/>
            <person name="Hamilton C."/>
            <person name="Henderson N."/>
            <person name="Hernandez O."/>
            <person name="Hines S."/>
            <person name="Hogues M.E."/>
            <person name="Huang M."/>
            <person name="Idlebird D.G."/>
            <person name="Johnson R."/>
            <person name="Jolivet A."/>
            <person name="Jones S."/>
            <person name="Kagan R."/>
            <person name="King L.M."/>
            <person name="Leal B."/>
            <person name="Lebow H."/>
            <person name="Lee S."/>
            <person name="LeVan J.M."/>
            <person name="Lewis L.C."/>
            <person name="London P."/>
            <person name="Lorensuhewa L.M."/>
            <person name="Loulseged H."/>
            <person name="Lovett D.A."/>
            <person name="Lucier A."/>
            <person name="Lucier R.L."/>
            <person name="Ma J."/>
            <person name="Madu R.C."/>
            <person name="Mapua P."/>
            <person name="Martindale A.D."/>
            <person name="Martinez E."/>
            <person name="Massey E."/>
            <person name="Mawhiney S."/>
            <person name="Meador M.G."/>
            <person name="Mendez S."/>
            <person name="Mercado C."/>
            <person name="Mercado I.C."/>
            <person name="Merritt C.E."/>
            <person name="Miner Z.L."/>
            <person name="Minja E."/>
            <person name="Mitchell T."/>
            <person name="Mohabbat F."/>
            <person name="Mohabbat K."/>
            <person name="Montgomery B."/>
            <person name="Moore N."/>
            <person name="Morris S."/>
            <person name="Munidasa M."/>
            <person name="Ngo R.N."/>
            <person name="Nguyen N.B."/>
            <person name="Nickerson E."/>
            <person name="Nwaokelemeh O.O."/>
            <person name="Nwokenkwo S."/>
            <person name="Obregon M."/>
            <person name="Oguh M."/>
            <person name="Oragunye N."/>
            <person name="Oviedo R.J."/>
            <person name="Parish B.J."/>
            <person name="Parker D.N."/>
            <person name="Parrish J."/>
            <person name="Parks K.L."/>
            <person name="Paul H.A."/>
            <person name="Payton B.A."/>
            <person name="Perez A."/>
            <person name="Perrin W."/>
            <person name="Pickens A."/>
            <person name="Primus E.L."/>
            <person name="Pu L.-L."/>
            <person name="Puazo M."/>
            <person name="Quiles M.M."/>
            <person name="Quiroz J.B."/>
            <person name="Rabata D."/>
            <person name="Reeves K."/>
            <person name="Ruiz S.J."/>
            <person name="Shao H."/>
            <person name="Sisson I."/>
            <person name="Sonaike T."/>
            <person name="Sorelle R.P."/>
            <person name="Sutton A.E."/>
            <person name="Svatek A.F."/>
            <person name="Svetz L.A."/>
            <person name="Tamerisa K.S."/>
            <person name="Taylor T.R."/>
            <person name="Teague B."/>
            <person name="Thomas N."/>
            <person name="Thorn R.D."/>
            <person name="Trejos Z.Y."/>
            <person name="Trevino B.K."/>
            <person name="Ukegbu O.N."/>
            <person name="Urban J.B."/>
            <person name="Vasquez L.I."/>
            <person name="Vera V.A."/>
            <person name="Villasana D.M."/>
            <person name="Wang L."/>
            <person name="Ward-Moore S."/>
            <person name="Warren J.T."/>
            <person name="Wei X."/>
            <person name="White F."/>
            <person name="Williamson A.L."/>
            <person name="Wleczyk R."/>
            <person name="Wooden H.S."/>
            <person name="Wooden S.H."/>
            <person name="Yen J."/>
            <person name="Yoon L."/>
            <person name="Yoon V."/>
            <person name="Zorrilla S.E."/>
            <person name="Nelson D."/>
            <person name="Kucherlapati R."/>
            <person name="Weinstock G."/>
            <person name="Gibbs R.A."/>
        </authorList>
    </citation>
    <scope>NUCLEOTIDE SEQUENCE [LARGE SCALE GENOMIC DNA]</scope>
</reference>
<reference key="2">
    <citation type="journal article" date="2007" name="BMC Genomics">
        <title>The full-ORF clone resource of the German cDNA consortium.</title>
        <authorList>
            <person name="Bechtel S."/>
            <person name="Rosenfelder H."/>
            <person name="Duda A."/>
            <person name="Schmidt C.P."/>
            <person name="Ernst U."/>
            <person name="Wellenreuther R."/>
            <person name="Mehrle A."/>
            <person name="Schuster C."/>
            <person name="Bahr A."/>
            <person name="Bloecker H."/>
            <person name="Heubner D."/>
            <person name="Hoerlein A."/>
            <person name="Michel G."/>
            <person name="Wedler H."/>
            <person name="Koehrer K."/>
            <person name="Ottenwaelder B."/>
            <person name="Poustka A."/>
            <person name="Wiemann S."/>
            <person name="Schupp I."/>
        </authorList>
    </citation>
    <scope>NUCLEOTIDE SEQUENCE [LARGE SCALE MRNA] OF 1-1063</scope>
    <scope>VARIANT GLN-187</scope>
</reference>
<reference key="3">
    <citation type="submission" date="2002-12" db="EMBL/GenBank/DDBJ databases">
        <title>Cloning of human full open reading frames in Gateway(TM) system entry vector (pDONR201).</title>
        <authorList>
            <person name="Ebert L."/>
            <person name="Schick M."/>
            <person name="Neubert P."/>
            <person name="Schatten R."/>
            <person name="Henze S."/>
            <person name="Korn B."/>
        </authorList>
    </citation>
    <scope>NUCLEOTIDE SEQUENCE [LARGE SCALE MRNA] OF 2218-2351</scope>
    <scope>VARIANT GLN-2228</scope>
</reference>
<sequence>MFFKMKNEIDNDPESEKCIKDSTIMRREPQNILSPLMLPNLEIPFSVKDIISRIERAQLHRAREDIDMQLSEIMNNVHRIMTRYTLVFNSSSERNVSLTEHKKKQRTNFLEKMATYAKTIEIREKTLANILAWLEEWNDVLSEMTLMDVDEHHHWIAQMELLPDTLKAIENNVKILSRFSTSFLDEKKKQKKKILSRGTLWKSWKERVIKRPSTARALRPDQMISDQLATNTKVSEIQGMLQELIGTTMFSTLENNAIKYISSTIVNLSTALSMLNDELKCVNFQSSTVYAHETSEAEKELSLKIIRDLSNENEMLQQKLQDAEEKCEQLIRSKIVIEQLYAKLSTSSTLKVLPGPSPQSSRAIIKVGDTEDNMDNILDKELENIVDEVQRKETKDSGIKWDSTISYTAQAERTPDLTELRQQPVASEDISEDSTKDNVSLKKGDFYQEDETDEYQSWKRSHKKATYVYETSGPNLSDNKSGQKVSEAKPSQYYELQVLKKKRKEMKSFSEDKSKSPTEAKRKHLSLTETKSQGGKSGTSMMMLEQFRKVKRESPFDKRPTAAEIKVEPTTESLDKEGKGEIRSLVEPLSMIQFDDTAEPQKGKIKGKKHHISSGTITSKEEKTEEKEELTKQVKSHQLVKSLSRVAKETSESTRVLESPDGKSEQSNLEEFQEAIMAFLKQKIDNIGKAFDKKTVPKEEELLKRAEAEKLGIIKAKMEEYFQKVAETVTKILRKYKDTKKEEQVGEKPIKQKKVVSFMPGLHFQKSPISAKSESSTLLSYESTDPVINNLIQMILAEIESERDIPTVSTVQKDHKEKEKQRQEQYLQEGQEQMSGMSLKQQLLGERNLLKEHYEKISENWEEKKAWLQMKEGKQEQQSQKQWQEEEMWKEEQKQATPKQAEQEEKQKQRGQEEEELPKSSLQRLEEGTQKMKTQGLLLEKENGQMRQIQKEAKHLGPHRRREKGKEKQKPERGLEDLERQIKTKDQMQMKETQPKELEKMVIQTPMTLSPRWKSVLKDVQRSYEGKEFQRNLKTLENLPDEKEPISITPPPSLQYSLPGALPISGQPLTKCIHLTPQQAQEVGITLTPQQAQAQGITLTLQQAQELGIPLTPQQAQALEILFTPQQAQALGIPLTPQQTQVQGITLTPQQDQAPGISLTTQQAQKLGIPLTPQQAQALGIPLTPQQAQELGIPLTPQQAQALRVSLTPQQAQELGIPLTPQQAQALGITLTLQQAQQLGIPLTPQQAQALGITLTPKQVQELGIPLTPQQAQALGITLTPKQAQELGIPLNPQQAQTLGIPLTPKQAQALGIPFTPQQAQALGIPLTPQQAQTQEITLTPQQAQALGMPLTTQQAQELGIPLTPQHAQALGMPLTTQQAQELGIPLTPQQAQALGMPLTTQQAQELGIPLTPQQAQELGIPFTPQQAQAQEITLTPQQAQALGMPLTAQQAQELGITLTPQQAQELGIPLTPQQAQALGIPLIPPQAQELGIPLTPQQAQALGILLIPPQAQELGIPLTPQQAQALGIPLIPPQAQELGIPLTPQQVQALGIPLIPPQAQELEIPLTPQQAQALGIPLTPQQAQELGIPLTPQQAQELGIPLTPQQAQAQGIPLTPQQAQALGISLTPQQAQAQGITLTPQQAQALGVPITPVNAWVSAVTLTSEQTHALESPMNLEQAQEQLLKLGVPLTLDKAHTLGSPLTLKQVQWSHRPFQKSKASLPTGQSIISRLSPSLRLSLASSAPTAEKSSIFGVSSTPLQISRVPLNQGPFAPGKPLEMGILSEPGKLGAPQTLRSSGQTLVYGGQSTSAQFPAPQAPPSPGQLPISRAPPTPGQPFIAGVPPTSGQIPSLWAPLSPGQPLVPEASSIPGDLLESGPLTFSEQLQEFQPPATAEQSPYLQAPSTPGQHLATWTLPGRASSLWIPPTSRHPPTLWPSPAPGKPQKSWSPSVAKKRLAIISSLKSKSVLIHPSAPDFKVAQVPFTTKKFQMSEVSDTSEETQILRDTFAIESFRTFQSHFTKYRTPVYQTPYTDERALLTLMKPTTSPSSLTTLLRTSQISPLEWYQKSRFPPIDKPWILSSVSDTKKPKVMVPPSSPQELEEKRYFVDVEAQKKNLILLNQAIKTCGLPSQLHTMARTLIIEILHMDTVQLGYLFRKYIAYRLIQHARNNIMKRLKAIQNTGKGYEARNLHMMLSRLDDYGKKVMQVWTEKQKSLGQKRNQCLKKMIHVFNQLKKIHELNLSQPIPLIIEEKQIPASTTFVQKPFLKLLMEEDRTSDICKKFRQQEDQTEAIWNVDLSTSSYPIAEKTSMHSLWAQLGGYPDIPRLLQLEVQSTFRKSLASLQSRVKKIPK</sequence>
<protein>
    <recommendedName>
        <fullName>Protein FAM186A</fullName>
    </recommendedName>
</protein>
<evidence type="ECO:0000255" key="1"/>
<evidence type="ECO:0000256" key="2">
    <source>
        <dbReference type="SAM" id="MobiDB-lite"/>
    </source>
</evidence>
<evidence type="ECO:0000269" key="3">
    <source>
    </source>
</evidence>
<evidence type="ECO:0000269" key="4">
    <source ref="3"/>
</evidence>
<evidence type="ECO:0000305" key="5"/>
<feature type="chain" id="PRO_0000332201" description="Protein FAM186A">
    <location>
        <begin position="1"/>
        <end position="2351"/>
    </location>
</feature>
<feature type="region of interest" description="Disordered" evidence="2">
    <location>
        <begin position="412"/>
        <end position="460"/>
    </location>
</feature>
<feature type="region of interest" description="Disordered" evidence="2">
    <location>
        <begin position="470"/>
        <end position="489"/>
    </location>
</feature>
<feature type="region of interest" description="Disordered" evidence="2">
    <location>
        <begin position="505"/>
        <end position="538"/>
    </location>
</feature>
<feature type="region of interest" description="Disordered" evidence="2">
    <location>
        <begin position="593"/>
        <end position="667"/>
    </location>
</feature>
<feature type="region of interest" description="Disordered" evidence="2">
    <location>
        <begin position="809"/>
        <end position="838"/>
    </location>
</feature>
<feature type="region of interest" description="Disordered" evidence="2">
    <location>
        <begin position="868"/>
        <end position="976"/>
    </location>
</feature>
<feature type="region of interest" description="Disordered" evidence="2">
    <location>
        <begin position="1805"/>
        <end position="1837"/>
    </location>
</feature>
<feature type="region of interest" description="Disordered" evidence="2">
    <location>
        <begin position="1888"/>
        <end position="1907"/>
    </location>
</feature>
<feature type="coiled-coil region" evidence="1">
    <location>
        <begin position="296"/>
        <end position="340"/>
    </location>
</feature>
<feature type="coiled-coil region" evidence="1">
    <location>
        <begin position="812"/>
        <end position="860"/>
    </location>
</feature>
<feature type="compositionally biased region" description="Basic and acidic residues" evidence="2">
    <location>
        <begin position="433"/>
        <end position="446"/>
    </location>
</feature>
<feature type="compositionally biased region" description="Polar residues" evidence="2">
    <location>
        <begin position="472"/>
        <end position="484"/>
    </location>
</feature>
<feature type="compositionally biased region" description="Basic and acidic residues" evidence="2">
    <location>
        <begin position="506"/>
        <end position="520"/>
    </location>
</feature>
<feature type="compositionally biased region" description="Polar residues" evidence="2">
    <location>
        <begin position="527"/>
        <end position="538"/>
    </location>
</feature>
<feature type="compositionally biased region" description="Basic residues" evidence="2">
    <location>
        <begin position="603"/>
        <end position="612"/>
    </location>
</feature>
<feature type="compositionally biased region" description="Basic and acidic residues" evidence="2">
    <location>
        <begin position="619"/>
        <end position="632"/>
    </location>
</feature>
<feature type="compositionally biased region" description="Basic and acidic residues" evidence="2">
    <location>
        <begin position="812"/>
        <end position="823"/>
    </location>
</feature>
<feature type="compositionally biased region" description="Polar residues" evidence="2">
    <location>
        <begin position="824"/>
        <end position="838"/>
    </location>
</feature>
<feature type="compositionally biased region" description="Basic and acidic residues" evidence="2">
    <location>
        <begin position="901"/>
        <end position="912"/>
    </location>
</feature>
<feature type="compositionally biased region" description="Basic and acidic residues" evidence="2">
    <location>
        <begin position="939"/>
        <end position="955"/>
    </location>
</feature>
<feature type="compositionally biased region" description="Basic and acidic residues" evidence="2">
    <location>
        <begin position="964"/>
        <end position="976"/>
    </location>
</feature>
<feature type="compositionally biased region" description="Pro residues" evidence="2">
    <location>
        <begin position="1816"/>
        <end position="1835"/>
    </location>
</feature>
<feature type="compositionally biased region" description="Polar residues" evidence="2">
    <location>
        <begin position="1894"/>
        <end position="1907"/>
    </location>
</feature>
<feature type="sequence variant" id="VAR_054419" description="In dbSNP:rs12303082." evidence="3">
    <original>K</original>
    <variation>Q</variation>
    <location>
        <position position="187"/>
    </location>
</feature>
<feature type="sequence variant" id="VAR_054420" description="In dbSNP:rs10876024.">
    <original>R</original>
    <variation>G</variation>
    <location>
        <position position="1204"/>
    </location>
</feature>
<feature type="sequence variant" id="VAR_054421" description="In dbSNP:rs10876023.">
    <original>L</original>
    <variation>P</variation>
    <location>
        <position position="1233"/>
    </location>
</feature>
<feature type="sequence variant" id="VAR_054422" description="In dbSNP:rs7296291.">
    <original>H</original>
    <variation>Y</variation>
    <location>
        <position position="2166"/>
    </location>
</feature>
<feature type="sequence variant" id="VAR_054423" description="In dbSNP:rs6580742.">
    <original>M</original>
    <variation>I</variation>
    <location>
        <position position="2193"/>
    </location>
</feature>
<feature type="sequence variant" id="VAR_054424" description="In dbSNP:rs6580741." evidence="4">
    <original>H</original>
    <variation>Q</variation>
    <location>
        <position position="2228"/>
    </location>
</feature>
<feature type="sequence variant" id="VAR_054425" description="In dbSNP:rs12809349.">
    <original>Q</original>
    <variation>E</variation>
    <location>
        <position position="2316"/>
    </location>
</feature>
<feature type="sequence conflict" description="In Ref. 2; AL833333." evidence="5" ref="2">
    <original>T</original>
    <variation>M</variation>
    <location>
        <position position="165"/>
    </location>
</feature>
<feature type="sequence conflict" description="In Ref. 2; AL833333." evidence="5" ref="2">
    <original>KKA</original>
    <variation>TKG</variation>
    <location>
        <begin position="463"/>
        <end position="465"/>
    </location>
</feature>
<feature type="sequence conflict" description="In Ref. 2; AL833333." evidence="5" ref="2">
    <original>Q</original>
    <variation>R</variation>
    <location>
        <position position="935"/>
    </location>
</feature>
<gene>
    <name type="primary">FAM186A</name>
</gene>
<proteinExistence type="evidence at protein level"/>
<accession>A6NE01</accession>
<dbReference type="EMBL" id="AC090058">
    <property type="status" value="NOT_ANNOTATED_CDS"/>
    <property type="molecule type" value="Genomic_DNA"/>
</dbReference>
<dbReference type="EMBL" id="AC140061">
    <property type="status" value="NOT_ANNOTATED_CDS"/>
    <property type="molecule type" value="Genomic_DNA"/>
</dbReference>
<dbReference type="EMBL" id="AL833333">
    <property type="status" value="NOT_ANNOTATED_CDS"/>
    <property type="molecule type" value="mRNA"/>
</dbReference>
<dbReference type="EMBL" id="BX099768">
    <property type="status" value="NOT_ANNOTATED_CDS"/>
    <property type="molecule type" value="mRNA"/>
</dbReference>
<dbReference type="CCDS" id="CCDS44878.1"/>
<dbReference type="RefSeq" id="NP_001138947.1">
    <property type="nucleotide sequence ID" value="NM_001145475.3"/>
</dbReference>
<dbReference type="SMR" id="A6NE01"/>
<dbReference type="BioGRID" id="125703">
    <property type="interactions" value="10"/>
</dbReference>
<dbReference type="FunCoup" id="A6NE01">
    <property type="interactions" value="2"/>
</dbReference>
<dbReference type="IntAct" id="A6NE01">
    <property type="interactions" value="4"/>
</dbReference>
<dbReference type="MINT" id="A6NE01"/>
<dbReference type="STRING" id="9606.ENSP00000329995"/>
<dbReference type="GlyGen" id="A6NE01">
    <property type="glycosylation" value="5 sites, 1 O-linked glycan (2 sites)"/>
</dbReference>
<dbReference type="iPTMnet" id="A6NE01"/>
<dbReference type="PhosphoSitePlus" id="A6NE01"/>
<dbReference type="BioMuta" id="FAM186A"/>
<dbReference type="jPOST" id="A6NE01"/>
<dbReference type="MassIVE" id="A6NE01"/>
<dbReference type="PaxDb" id="9606-ENSP00000329995"/>
<dbReference type="PeptideAtlas" id="A6NE01"/>
<dbReference type="ProteomicsDB" id="951"/>
<dbReference type="Antibodypedia" id="49485">
    <property type="antibodies" value="9 antibodies from 6 providers"/>
</dbReference>
<dbReference type="DNASU" id="121006"/>
<dbReference type="Ensembl" id="ENST00000327337.6">
    <property type="protein sequence ID" value="ENSP00000329995.5"/>
    <property type="gene ID" value="ENSG00000185958.10"/>
</dbReference>
<dbReference type="GeneID" id="121006"/>
<dbReference type="KEGG" id="hsa:121006"/>
<dbReference type="MANE-Select" id="ENST00000327337.6">
    <property type="protein sequence ID" value="ENSP00000329995.5"/>
    <property type="RefSeq nucleotide sequence ID" value="NM_001145475.3"/>
    <property type="RefSeq protein sequence ID" value="NP_001138947.1"/>
</dbReference>
<dbReference type="UCSC" id="uc001rwl.3">
    <property type="organism name" value="human"/>
</dbReference>
<dbReference type="AGR" id="HGNC:26980"/>
<dbReference type="CTD" id="121006"/>
<dbReference type="DisGeNET" id="121006"/>
<dbReference type="GeneCards" id="FAM186A"/>
<dbReference type="HGNC" id="HGNC:26980">
    <property type="gene designation" value="FAM186A"/>
</dbReference>
<dbReference type="HPA" id="ENSG00000185958">
    <property type="expression patterns" value="Tissue enriched (testis)"/>
</dbReference>
<dbReference type="neXtProt" id="NX_A6NE01"/>
<dbReference type="OpenTargets" id="ENSG00000185958"/>
<dbReference type="PharmGKB" id="PA164719869"/>
<dbReference type="VEuPathDB" id="HostDB:ENSG00000185958"/>
<dbReference type="eggNOG" id="ENOG502S707">
    <property type="taxonomic scope" value="Eukaryota"/>
</dbReference>
<dbReference type="GeneTree" id="ENSGT00940000163376"/>
<dbReference type="HOGENOM" id="CLU_232743_0_0_1"/>
<dbReference type="InParanoid" id="A6NE01"/>
<dbReference type="OMA" id="VEPLNMI"/>
<dbReference type="OrthoDB" id="9942939at2759"/>
<dbReference type="PAN-GO" id="A6NE01">
    <property type="GO annotations" value="0 GO annotations based on evolutionary models"/>
</dbReference>
<dbReference type="PhylomeDB" id="A6NE01"/>
<dbReference type="TreeFam" id="TF338344"/>
<dbReference type="PathwayCommons" id="A6NE01"/>
<dbReference type="SignaLink" id="A6NE01"/>
<dbReference type="BioGRID-ORCS" id="121006">
    <property type="hits" value="10 hits in 1141 CRISPR screens"/>
</dbReference>
<dbReference type="ChiTaRS" id="FAM186A">
    <property type="organism name" value="human"/>
</dbReference>
<dbReference type="GenomeRNAi" id="121006"/>
<dbReference type="Pharos" id="A6NE01">
    <property type="development level" value="Tdark"/>
</dbReference>
<dbReference type="PRO" id="PR:A6NE01"/>
<dbReference type="Proteomes" id="UP000005640">
    <property type="component" value="Chromosome 12"/>
</dbReference>
<dbReference type="RNAct" id="A6NE01">
    <property type="molecule type" value="protein"/>
</dbReference>
<dbReference type="Bgee" id="ENSG00000185958">
    <property type="expression patterns" value="Expressed in right testis and 79 other cell types or tissues"/>
</dbReference>
<dbReference type="ExpressionAtlas" id="A6NE01">
    <property type="expression patterns" value="baseline and differential"/>
</dbReference>
<dbReference type="InterPro" id="IPR049146">
    <property type="entry name" value="FAM186A_B_C"/>
</dbReference>
<dbReference type="InterPro" id="IPR049144">
    <property type="entry name" value="FAM186A_B_N"/>
</dbReference>
<dbReference type="InterPro" id="IPR049147">
    <property type="entry name" value="FAM186A_PQQAQ"/>
</dbReference>
<dbReference type="PANTHER" id="PTHR33590">
    <property type="entry name" value="GLUTENIN, HIGH MOLECULAR WEIGHT SUBUNIT PW212-RELATED PROTEIN"/>
    <property type="match status" value="1"/>
</dbReference>
<dbReference type="PANTHER" id="PTHR33590:SF2">
    <property type="entry name" value="PROTEIN FAM186A"/>
    <property type="match status" value="1"/>
</dbReference>
<dbReference type="Pfam" id="PF20865">
    <property type="entry name" value="FAM186A-B_C"/>
    <property type="match status" value="1"/>
</dbReference>
<dbReference type="Pfam" id="PF20870">
    <property type="entry name" value="FAM186A-B_N"/>
    <property type="match status" value="1"/>
</dbReference>
<dbReference type="Pfam" id="PF20869">
    <property type="entry name" value="FAM186A_PQQAQ"/>
    <property type="match status" value="17"/>
</dbReference>
<organism>
    <name type="scientific">Homo sapiens</name>
    <name type="common">Human</name>
    <dbReference type="NCBI Taxonomy" id="9606"/>
    <lineage>
        <taxon>Eukaryota</taxon>
        <taxon>Metazoa</taxon>
        <taxon>Chordata</taxon>
        <taxon>Craniata</taxon>
        <taxon>Vertebrata</taxon>
        <taxon>Euteleostomi</taxon>
        <taxon>Mammalia</taxon>
        <taxon>Eutheria</taxon>
        <taxon>Euarchontoglires</taxon>
        <taxon>Primates</taxon>
        <taxon>Haplorrhini</taxon>
        <taxon>Catarrhini</taxon>
        <taxon>Hominidae</taxon>
        <taxon>Homo</taxon>
    </lineage>
</organism>
<keyword id="KW-0175">Coiled coil</keyword>
<keyword id="KW-1267">Proteomics identification</keyword>
<keyword id="KW-1185">Reference proteome</keyword>
<comment type="similarity">
    <text evidence="5">Belongs to the FAM186 family.</text>
</comment>